<name>THIK_ECO27</name>
<feature type="chain" id="PRO_1000185831" description="Thiamine kinase">
    <location>
        <begin position="1"/>
        <end position="274"/>
    </location>
</feature>
<reference key="1">
    <citation type="journal article" date="2009" name="J. Bacteriol.">
        <title>Complete genome sequence and comparative genome analysis of enteropathogenic Escherichia coli O127:H6 strain E2348/69.</title>
        <authorList>
            <person name="Iguchi A."/>
            <person name="Thomson N.R."/>
            <person name="Ogura Y."/>
            <person name="Saunders D."/>
            <person name="Ooka T."/>
            <person name="Henderson I.R."/>
            <person name="Harris D."/>
            <person name="Asadulghani M."/>
            <person name="Kurokawa K."/>
            <person name="Dean P."/>
            <person name="Kenny B."/>
            <person name="Quail M.A."/>
            <person name="Thurston S."/>
            <person name="Dougan G."/>
            <person name="Hayashi T."/>
            <person name="Parkhill J."/>
            <person name="Frankel G."/>
        </authorList>
    </citation>
    <scope>NUCLEOTIDE SEQUENCE [LARGE SCALE GENOMIC DNA]</scope>
    <source>
        <strain>E2348/69 / EPEC</strain>
    </source>
</reference>
<proteinExistence type="inferred from homology"/>
<accession>B7UPC2</accession>
<protein>
    <recommendedName>
        <fullName evidence="1">Thiamine kinase</fullName>
        <ecNumber evidence="1">2.7.1.89</ecNumber>
    </recommendedName>
</protein>
<dbReference type="EC" id="2.7.1.89" evidence="1"/>
<dbReference type="EMBL" id="FM180568">
    <property type="protein sequence ID" value="CAS08746.1"/>
    <property type="molecule type" value="Genomic_DNA"/>
</dbReference>
<dbReference type="RefSeq" id="WP_001116587.1">
    <property type="nucleotide sequence ID" value="NC_011601.1"/>
</dbReference>
<dbReference type="SMR" id="B7UPC2"/>
<dbReference type="KEGG" id="ecg:E2348C_1198"/>
<dbReference type="HOGENOM" id="CLU_055115_2_1_6"/>
<dbReference type="UniPathway" id="UPA00060">
    <property type="reaction ID" value="UER00596"/>
</dbReference>
<dbReference type="Proteomes" id="UP000008205">
    <property type="component" value="Chromosome"/>
</dbReference>
<dbReference type="GO" id="GO:0005524">
    <property type="term" value="F:ATP binding"/>
    <property type="evidence" value="ECO:0007669"/>
    <property type="project" value="UniProtKB-KW"/>
</dbReference>
<dbReference type="GO" id="GO:0019165">
    <property type="term" value="F:thiamine kinase activity"/>
    <property type="evidence" value="ECO:0007669"/>
    <property type="project" value="UniProtKB-UniRule"/>
</dbReference>
<dbReference type="GO" id="GO:0009229">
    <property type="term" value="P:thiamine diphosphate biosynthetic process"/>
    <property type="evidence" value="ECO:0007669"/>
    <property type="project" value="UniProtKB-UniRule"/>
</dbReference>
<dbReference type="GO" id="GO:0006772">
    <property type="term" value="P:thiamine metabolic process"/>
    <property type="evidence" value="ECO:0007669"/>
    <property type="project" value="InterPro"/>
</dbReference>
<dbReference type="FunFam" id="3.90.1200.10:FF:000004">
    <property type="entry name" value="Thiamine kinase"/>
    <property type="match status" value="1"/>
</dbReference>
<dbReference type="Gene3D" id="3.90.1200.10">
    <property type="match status" value="1"/>
</dbReference>
<dbReference type="HAMAP" id="MF_01604">
    <property type="entry name" value="Thiamine_kinase"/>
    <property type="match status" value="1"/>
</dbReference>
<dbReference type="InterPro" id="IPR002575">
    <property type="entry name" value="Aminoglycoside_PTrfase"/>
</dbReference>
<dbReference type="InterPro" id="IPR011009">
    <property type="entry name" value="Kinase-like_dom_sf"/>
</dbReference>
<dbReference type="InterPro" id="IPR014093">
    <property type="entry name" value="Thiamine_kinase"/>
</dbReference>
<dbReference type="NCBIfam" id="NF007620">
    <property type="entry name" value="PRK10271.1"/>
    <property type="match status" value="1"/>
</dbReference>
<dbReference type="NCBIfam" id="TIGR02721">
    <property type="entry name" value="ycfN_thiK"/>
    <property type="match status" value="1"/>
</dbReference>
<dbReference type="Pfam" id="PF01636">
    <property type="entry name" value="APH"/>
    <property type="match status" value="1"/>
</dbReference>
<dbReference type="SUPFAM" id="SSF56112">
    <property type="entry name" value="Protein kinase-like (PK-like)"/>
    <property type="match status" value="1"/>
</dbReference>
<sequence length="274" mass="32538">MPFRSNNPITRDELLSRFFPQFHPVTTFNSGLSGGSFLIEHQGQRFVVRQPHDPDAPRFAFLRQYRALSQLPACIAPKPHLYLRDWMVVDYLPGEVKTYLPDTNELAGLLYYLHQQPRFGWRITLLPLLELYWQQSDPARRTVGWLRRLKRLRKAREPRPLRLSPLHMDVHAGNLVHSASGLKLIDWEYAGDGDIALELAAVWVENTDQHRQLVNDYATRAKIYPAQLWRQVRRWFPWLLMLKAGWFEYRWRQTGDQQFIRLADDTWRQLLIKQ</sequence>
<gene>
    <name evidence="1" type="primary">thiK</name>
    <name type="ordered locus">E2348C_1198</name>
</gene>
<evidence type="ECO:0000255" key="1">
    <source>
        <dbReference type="HAMAP-Rule" id="MF_01604"/>
    </source>
</evidence>
<keyword id="KW-0067">ATP-binding</keyword>
<keyword id="KW-0418">Kinase</keyword>
<keyword id="KW-0547">Nucleotide-binding</keyword>
<keyword id="KW-1185">Reference proteome</keyword>
<keyword id="KW-0808">Transferase</keyword>
<organism>
    <name type="scientific">Escherichia coli O127:H6 (strain E2348/69 / EPEC)</name>
    <dbReference type="NCBI Taxonomy" id="574521"/>
    <lineage>
        <taxon>Bacteria</taxon>
        <taxon>Pseudomonadati</taxon>
        <taxon>Pseudomonadota</taxon>
        <taxon>Gammaproteobacteria</taxon>
        <taxon>Enterobacterales</taxon>
        <taxon>Enterobacteriaceae</taxon>
        <taxon>Escherichia</taxon>
    </lineage>
</organism>
<comment type="function">
    <text evidence="1">Catalyzes the ATP-dependent phosphorylation of thiamine to thiamine phosphate. Is involved in thiamine salvage.</text>
</comment>
<comment type="catalytic activity">
    <reaction evidence="1">
        <text>thiamine + ATP = thiamine phosphate + ADP + H(+)</text>
        <dbReference type="Rhea" id="RHEA:12012"/>
        <dbReference type="ChEBI" id="CHEBI:15378"/>
        <dbReference type="ChEBI" id="CHEBI:18385"/>
        <dbReference type="ChEBI" id="CHEBI:30616"/>
        <dbReference type="ChEBI" id="CHEBI:37575"/>
        <dbReference type="ChEBI" id="CHEBI:456216"/>
        <dbReference type="EC" id="2.7.1.89"/>
    </reaction>
    <physiologicalReaction direction="left-to-right" evidence="1">
        <dbReference type="Rhea" id="RHEA:12013"/>
    </physiologicalReaction>
</comment>
<comment type="pathway">
    <text evidence="1">Cofactor biosynthesis; thiamine diphosphate biosynthesis; thiamine phosphate from thiamine: step 1/1.</text>
</comment>
<comment type="similarity">
    <text evidence="1">Belongs to the thiamine kinase family.</text>
</comment>